<dbReference type="EC" id="2.3.3.13" evidence="1"/>
<dbReference type="EMBL" id="CP001013">
    <property type="protein sequence ID" value="ACB35153.1"/>
    <property type="molecule type" value="Genomic_DNA"/>
</dbReference>
<dbReference type="RefSeq" id="WP_012347907.1">
    <property type="nucleotide sequence ID" value="NC_010524.1"/>
</dbReference>
<dbReference type="SMR" id="B1XYA8"/>
<dbReference type="STRING" id="395495.Lcho_2888"/>
<dbReference type="KEGG" id="lch:Lcho_2888"/>
<dbReference type="eggNOG" id="COG0119">
    <property type="taxonomic scope" value="Bacteria"/>
</dbReference>
<dbReference type="HOGENOM" id="CLU_022158_0_1_4"/>
<dbReference type="OrthoDB" id="9803573at2"/>
<dbReference type="UniPathway" id="UPA00048">
    <property type="reaction ID" value="UER00070"/>
</dbReference>
<dbReference type="Proteomes" id="UP000001693">
    <property type="component" value="Chromosome"/>
</dbReference>
<dbReference type="GO" id="GO:0005829">
    <property type="term" value="C:cytosol"/>
    <property type="evidence" value="ECO:0007669"/>
    <property type="project" value="TreeGrafter"/>
</dbReference>
<dbReference type="GO" id="GO:0003852">
    <property type="term" value="F:2-isopropylmalate synthase activity"/>
    <property type="evidence" value="ECO:0007669"/>
    <property type="project" value="UniProtKB-UniRule"/>
</dbReference>
<dbReference type="GO" id="GO:0003985">
    <property type="term" value="F:acetyl-CoA C-acetyltransferase activity"/>
    <property type="evidence" value="ECO:0007669"/>
    <property type="project" value="UniProtKB-UniRule"/>
</dbReference>
<dbReference type="GO" id="GO:0030145">
    <property type="term" value="F:manganese ion binding"/>
    <property type="evidence" value="ECO:0007669"/>
    <property type="project" value="UniProtKB-UniRule"/>
</dbReference>
<dbReference type="GO" id="GO:0009098">
    <property type="term" value="P:L-leucine biosynthetic process"/>
    <property type="evidence" value="ECO:0007669"/>
    <property type="project" value="UniProtKB-UniRule"/>
</dbReference>
<dbReference type="CDD" id="cd07940">
    <property type="entry name" value="DRE_TIM_IPMS"/>
    <property type="match status" value="1"/>
</dbReference>
<dbReference type="FunFam" id="1.10.238.260:FF:000001">
    <property type="entry name" value="2-isopropylmalate synthase"/>
    <property type="match status" value="1"/>
</dbReference>
<dbReference type="FunFam" id="3.20.20.70:FF:000010">
    <property type="entry name" value="2-isopropylmalate synthase"/>
    <property type="match status" value="1"/>
</dbReference>
<dbReference type="Gene3D" id="1.10.238.260">
    <property type="match status" value="1"/>
</dbReference>
<dbReference type="Gene3D" id="3.30.160.270">
    <property type="match status" value="1"/>
</dbReference>
<dbReference type="Gene3D" id="3.20.20.70">
    <property type="entry name" value="Aldolase class I"/>
    <property type="match status" value="1"/>
</dbReference>
<dbReference type="HAMAP" id="MF_01025">
    <property type="entry name" value="LeuA_type1"/>
    <property type="match status" value="1"/>
</dbReference>
<dbReference type="InterPro" id="IPR050073">
    <property type="entry name" value="2-IPM_HCS-like"/>
</dbReference>
<dbReference type="InterPro" id="IPR013709">
    <property type="entry name" value="2-isopropylmalate_synth_dimer"/>
</dbReference>
<dbReference type="InterPro" id="IPR002034">
    <property type="entry name" value="AIPM/Hcit_synth_CS"/>
</dbReference>
<dbReference type="InterPro" id="IPR013785">
    <property type="entry name" value="Aldolase_TIM"/>
</dbReference>
<dbReference type="InterPro" id="IPR054691">
    <property type="entry name" value="LeuA/HCS_post-cat"/>
</dbReference>
<dbReference type="InterPro" id="IPR036230">
    <property type="entry name" value="LeuA_allosteric_dom_sf"/>
</dbReference>
<dbReference type="InterPro" id="IPR005671">
    <property type="entry name" value="LeuA_bact_synth"/>
</dbReference>
<dbReference type="InterPro" id="IPR000891">
    <property type="entry name" value="PYR_CT"/>
</dbReference>
<dbReference type="NCBIfam" id="TIGR00973">
    <property type="entry name" value="leuA_bact"/>
    <property type="match status" value="1"/>
</dbReference>
<dbReference type="NCBIfam" id="NF002086">
    <property type="entry name" value="PRK00915.1-3"/>
    <property type="match status" value="1"/>
</dbReference>
<dbReference type="NCBIfam" id="NF002087">
    <property type="entry name" value="PRK00915.1-4"/>
    <property type="match status" value="1"/>
</dbReference>
<dbReference type="PANTHER" id="PTHR10277:SF9">
    <property type="entry name" value="2-ISOPROPYLMALATE SYNTHASE 1, CHLOROPLASTIC-RELATED"/>
    <property type="match status" value="1"/>
</dbReference>
<dbReference type="PANTHER" id="PTHR10277">
    <property type="entry name" value="HOMOCITRATE SYNTHASE-RELATED"/>
    <property type="match status" value="1"/>
</dbReference>
<dbReference type="Pfam" id="PF22617">
    <property type="entry name" value="HCS_D2"/>
    <property type="match status" value="1"/>
</dbReference>
<dbReference type="Pfam" id="PF00682">
    <property type="entry name" value="HMGL-like"/>
    <property type="match status" value="1"/>
</dbReference>
<dbReference type="Pfam" id="PF08502">
    <property type="entry name" value="LeuA_dimer"/>
    <property type="match status" value="1"/>
</dbReference>
<dbReference type="SMART" id="SM00917">
    <property type="entry name" value="LeuA_dimer"/>
    <property type="match status" value="1"/>
</dbReference>
<dbReference type="SUPFAM" id="SSF110921">
    <property type="entry name" value="2-isopropylmalate synthase LeuA, allosteric (dimerisation) domain"/>
    <property type="match status" value="1"/>
</dbReference>
<dbReference type="SUPFAM" id="SSF51569">
    <property type="entry name" value="Aldolase"/>
    <property type="match status" value="1"/>
</dbReference>
<dbReference type="PROSITE" id="PS00815">
    <property type="entry name" value="AIPM_HOMOCIT_SYNTH_1"/>
    <property type="match status" value="1"/>
</dbReference>
<dbReference type="PROSITE" id="PS00816">
    <property type="entry name" value="AIPM_HOMOCIT_SYNTH_2"/>
    <property type="match status" value="1"/>
</dbReference>
<dbReference type="PROSITE" id="PS50991">
    <property type="entry name" value="PYR_CT"/>
    <property type="match status" value="1"/>
</dbReference>
<proteinExistence type="inferred from homology"/>
<gene>
    <name evidence="1" type="primary">leuA</name>
    <name type="ordered locus">Lcho_2888</name>
</gene>
<name>LEU1_LEPCP</name>
<comment type="function">
    <text evidence="1">Catalyzes the condensation of the acetyl group of acetyl-CoA with 3-methyl-2-oxobutanoate (2-ketoisovalerate) to form 3-carboxy-3-hydroxy-4-methylpentanoate (2-isopropylmalate).</text>
</comment>
<comment type="catalytic activity">
    <reaction evidence="1">
        <text>3-methyl-2-oxobutanoate + acetyl-CoA + H2O = (2S)-2-isopropylmalate + CoA + H(+)</text>
        <dbReference type="Rhea" id="RHEA:21524"/>
        <dbReference type="ChEBI" id="CHEBI:1178"/>
        <dbReference type="ChEBI" id="CHEBI:11851"/>
        <dbReference type="ChEBI" id="CHEBI:15377"/>
        <dbReference type="ChEBI" id="CHEBI:15378"/>
        <dbReference type="ChEBI" id="CHEBI:57287"/>
        <dbReference type="ChEBI" id="CHEBI:57288"/>
        <dbReference type="EC" id="2.3.3.13"/>
    </reaction>
</comment>
<comment type="cofactor">
    <cofactor evidence="1">
        <name>Mn(2+)</name>
        <dbReference type="ChEBI" id="CHEBI:29035"/>
    </cofactor>
</comment>
<comment type="pathway">
    <text evidence="1">Amino-acid biosynthesis; L-leucine biosynthesis; L-leucine from 3-methyl-2-oxobutanoate: step 1/4.</text>
</comment>
<comment type="subunit">
    <text evidence="1">Homodimer.</text>
</comment>
<comment type="subcellular location">
    <subcellularLocation>
        <location evidence="1">Cytoplasm</location>
    </subcellularLocation>
</comment>
<comment type="similarity">
    <text evidence="1">Belongs to the alpha-IPM synthase/homocitrate synthase family. LeuA type 1 subfamily.</text>
</comment>
<reference key="1">
    <citation type="submission" date="2008-03" db="EMBL/GenBank/DDBJ databases">
        <title>Complete sequence of Leptothrix cholodnii SP-6.</title>
        <authorList>
            <consortium name="US DOE Joint Genome Institute"/>
            <person name="Copeland A."/>
            <person name="Lucas S."/>
            <person name="Lapidus A."/>
            <person name="Glavina del Rio T."/>
            <person name="Dalin E."/>
            <person name="Tice H."/>
            <person name="Bruce D."/>
            <person name="Goodwin L."/>
            <person name="Pitluck S."/>
            <person name="Chertkov O."/>
            <person name="Brettin T."/>
            <person name="Detter J.C."/>
            <person name="Han C."/>
            <person name="Kuske C.R."/>
            <person name="Schmutz J."/>
            <person name="Larimer F."/>
            <person name="Land M."/>
            <person name="Hauser L."/>
            <person name="Kyrpides N."/>
            <person name="Lykidis A."/>
            <person name="Emerson D."/>
            <person name="Richardson P."/>
        </authorList>
    </citation>
    <scope>NUCLEOTIDE SEQUENCE [LARGE SCALE GENOMIC DNA]</scope>
    <source>
        <strain>ATCC 51168 / LMG 8142 / SP-6</strain>
    </source>
</reference>
<sequence length="513" mass="55500">MSDQLIIFDTTLRDGEQSPGASMTRDEKLRIARQLERLKVDVIEAGFAASSNGDFEAVKAIADVIKDSTICSLARANDRDISRAAEALRGANRARIHTFIATSALHMEKKLRMSPDEVLEQARLSVRFARNLCGDIEFSPEDGYRSDPDFLCRVLEAVIDEGATTLNIPDTVGYAIPELYGNFIRNLRERVPNSDKAIWSVHCHNDLGMAVANSLAGVKIGGARQVECTINGLGERAGNCSLEEVVMAVKTRRDYFGLDLRVDTSQIVPASRMVAQTTGFVVQPNKAVVGANAFAHASGIHQDGVLKARDTYEIMRAEDVGWSANKIVLGKLSGRNAFKQRLQDLGIALESEAEVNAAFMKFKDLADRKSEIFDEDILALVSDEQSDNQAEHYRLLALSQHSEMGERPHAEVAFAAGDVEHHARSDGNGPVDASIKAIESKVGTGAELLLYSVNAITSGSTESQGEVTVRLQLGGRIVNGVGADPDIVVASAKAYLAALNKLHSKAERVAAQG</sequence>
<evidence type="ECO:0000255" key="1">
    <source>
        <dbReference type="HAMAP-Rule" id="MF_01025"/>
    </source>
</evidence>
<feature type="chain" id="PRO_1000149215" description="2-isopropylmalate synthase">
    <location>
        <begin position="1"/>
        <end position="513"/>
    </location>
</feature>
<feature type="domain" description="Pyruvate carboxyltransferase" evidence="1">
    <location>
        <begin position="5"/>
        <end position="268"/>
    </location>
</feature>
<feature type="region of interest" description="Regulatory domain" evidence="1">
    <location>
        <begin position="394"/>
        <end position="513"/>
    </location>
</feature>
<feature type="binding site" evidence="1">
    <location>
        <position position="14"/>
    </location>
    <ligand>
        <name>Mn(2+)</name>
        <dbReference type="ChEBI" id="CHEBI:29035"/>
    </ligand>
</feature>
<feature type="binding site" evidence="1">
    <location>
        <position position="202"/>
    </location>
    <ligand>
        <name>Mn(2+)</name>
        <dbReference type="ChEBI" id="CHEBI:29035"/>
    </ligand>
</feature>
<feature type="binding site" evidence="1">
    <location>
        <position position="204"/>
    </location>
    <ligand>
        <name>Mn(2+)</name>
        <dbReference type="ChEBI" id="CHEBI:29035"/>
    </ligand>
</feature>
<feature type="binding site" evidence="1">
    <location>
        <position position="239"/>
    </location>
    <ligand>
        <name>Mn(2+)</name>
        <dbReference type="ChEBI" id="CHEBI:29035"/>
    </ligand>
</feature>
<organism>
    <name type="scientific">Leptothrix cholodnii (strain ATCC 51168 / LMG 8142 / SP-6)</name>
    <name type="common">Leptothrix discophora (strain SP-6)</name>
    <dbReference type="NCBI Taxonomy" id="395495"/>
    <lineage>
        <taxon>Bacteria</taxon>
        <taxon>Pseudomonadati</taxon>
        <taxon>Pseudomonadota</taxon>
        <taxon>Betaproteobacteria</taxon>
        <taxon>Burkholderiales</taxon>
        <taxon>Sphaerotilaceae</taxon>
        <taxon>Leptothrix</taxon>
    </lineage>
</organism>
<accession>B1XYA8</accession>
<protein>
    <recommendedName>
        <fullName evidence="1">2-isopropylmalate synthase</fullName>
        <ecNumber evidence="1">2.3.3.13</ecNumber>
    </recommendedName>
    <alternativeName>
        <fullName evidence="1">Alpha-IPM synthase</fullName>
    </alternativeName>
    <alternativeName>
        <fullName evidence="1">Alpha-isopropylmalate synthase</fullName>
    </alternativeName>
</protein>
<keyword id="KW-0028">Amino-acid biosynthesis</keyword>
<keyword id="KW-0100">Branched-chain amino acid biosynthesis</keyword>
<keyword id="KW-0963">Cytoplasm</keyword>
<keyword id="KW-0432">Leucine biosynthesis</keyword>
<keyword id="KW-0464">Manganese</keyword>
<keyword id="KW-0479">Metal-binding</keyword>
<keyword id="KW-1185">Reference proteome</keyword>
<keyword id="KW-0808">Transferase</keyword>